<protein>
    <recommendedName>
        <fullName evidence="1">Dihydroxy-acid dehydratase</fullName>
        <shortName evidence="1">DAD</shortName>
        <ecNumber evidence="1">4.2.1.9</ecNumber>
    </recommendedName>
</protein>
<organism>
    <name type="scientific">Bacillus cereus (strain Q1)</name>
    <dbReference type="NCBI Taxonomy" id="361100"/>
    <lineage>
        <taxon>Bacteria</taxon>
        <taxon>Bacillati</taxon>
        <taxon>Bacillota</taxon>
        <taxon>Bacilli</taxon>
        <taxon>Bacillales</taxon>
        <taxon>Bacillaceae</taxon>
        <taxon>Bacillus</taxon>
        <taxon>Bacillus cereus group</taxon>
    </lineage>
</organism>
<feature type="chain" id="PRO_1000190650" description="Dihydroxy-acid dehydratase">
    <location>
        <begin position="1"/>
        <end position="557"/>
    </location>
</feature>
<feature type="active site" description="Proton acceptor" evidence="1">
    <location>
        <position position="468"/>
    </location>
</feature>
<feature type="binding site" evidence="1">
    <location>
        <position position="78"/>
    </location>
    <ligand>
        <name>Mg(2+)</name>
        <dbReference type="ChEBI" id="CHEBI:18420"/>
    </ligand>
</feature>
<feature type="binding site" evidence="1">
    <location>
        <position position="119"/>
    </location>
    <ligand>
        <name>[2Fe-2S] cluster</name>
        <dbReference type="ChEBI" id="CHEBI:190135"/>
    </ligand>
</feature>
<feature type="binding site" evidence="1">
    <location>
        <position position="120"/>
    </location>
    <ligand>
        <name>Mg(2+)</name>
        <dbReference type="ChEBI" id="CHEBI:18420"/>
    </ligand>
</feature>
<feature type="binding site" description="via carbamate group" evidence="1">
    <location>
        <position position="121"/>
    </location>
    <ligand>
        <name>Mg(2+)</name>
        <dbReference type="ChEBI" id="CHEBI:18420"/>
    </ligand>
</feature>
<feature type="binding site" evidence="1">
    <location>
        <position position="192"/>
    </location>
    <ligand>
        <name>[2Fe-2S] cluster</name>
        <dbReference type="ChEBI" id="CHEBI:190135"/>
    </ligand>
</feature>
<feature type="binding site" evidence="1">
    <location>
        <position position="442"/>
    </location>
    <ligand>
        <name>Mg(2+)</name>
        <dbReference type="ChEBI" id="CHEBI:18420"/>
    </ligand>
</feature>
<feature type="modified residue" description="N6-carboxylysine" evidence="1">
    <location>
        <position position="121"/>
    </location>
</feature>
<comment type="function">
    <text evidence="1">Functions in the biosynthesis of branched-chain amino acids. Catalyzes the dehydration of (2R,3R)-2,3-dihydroxy-3-methylpentanoate (2,3-dihydroxy-3-methylvalerate) into 2-oxo-3-methylpentanoate (2-oxo-3-methylvalerate) and of (2R)-2,3-dihydroxy-3-methylbutanoate (2,3-dihydroxyisovalerate) into 2-oxo-3-methylbutanoate (2-oxoisovalerate), the penultimate precursor to L-isoleucine and L-valine, respectively.</text>
</comment>
<comment type="catalytic activity">
    <reaction evidence="1">
        <text>(2R)-2,3-dihydroxy-3-methylbutanoate = 3-methyl-2-oxobutanoate + H2O</text>
        <dbReference type="Rhea" id="RHEA:24809"/>
        <dbReference type="ChEBI" id="CHEBI:11851"/>
        <dbReference type="ChEBI" id="CHEBI:15377"/>
        <dbReference type="ChEBI" id="CHEBI:49072"/>
        <dbReference type="EC" id="4.2.1.9"/>
    </reaction>
    <physiologicalReaction direction="left-to-right" evidence="1">
        <dbReference type="Rhea" id="RHEA:24810"/>
    </physiologicalReaction>
</comment>
<comment type="catalytic activity">
    <reaction evidence="1">
        <text>(2R,3R)-2,3-dihydroxy-3-methylpentanoate = (S)-3-methyl-2-oxopentanoate + H2O</text>
        <dbReference type="Rhea" id="RHEA:27694"/>
        <dbReference type="ChEBI" id="CHEBI:15377"/>
        <dbReference type="ChEBI" id="CHEBI:35146"/>
        <dbReference type="ChEBI" id="CHEBI:49258"/>
        <dbReference type="EC" id="4.2.1.9"/>
    </reaction>
    <physiologicalReaction direction="left-to-right" evidence="1">
        <dbReference type="Rhea" id="RHEA:27695"/>
    </physiologicalReaction>
</comment>
<comment type="cofactor">
    <cofactor evidence="1">
        <name>[2Fe-2S] cluster</name>
        <dbReference type="ChEBI" id="CHEBI:190135"/>
    </cofactor>
    <text evidence="1">Binds 1 [2Fe-2S] cluster per subunit. This cluster acts as a Lewis acid cofactor.</text>
</comment>
<comment type="cofactor">
    <cofactor evidence="1">
        <name>Mg(2+)</name>
        <dbReference type="ChEBI" id="CHEBI:18420"/>
    </cofactor>
</comment>
<comment type="pathway">
    <text evidence="1">Amino-acid biosynthesis; L-isoleucine biosynthesis; L-isoleucine from 2-oxobutanoate: step 3/4.</text>
</comment>
<comment type="pathway">
    <text evidence="1">Amino-acid biosynthesis; L-valine biosynthesis; L-valine from pyruvate: step 3/4.</text>
</comment>
<comment type="subunit">
    <text evidence="1">Homodimer.</text>
</comment>
<comment type="similarity">
    <text evidence="1">Belongs to the IlvD/Edd family.</text>
</comment>
<proteinExistence type="inferred from homology"/>
<keyword id="KW-0001">2Fe-2S</keyword>
<keyword id="KW-0028">Amino-acid biosynthesis</keyword>
<keyword id="KW-0100">Branched-chain amino acid biosynthesis</keyword>
<keyword id="KW-0408">Iron</keyword>
<keyword id="KW-0411">Iron-sulfur</keyword>
<keyword id="KW-0456">Lyase</keyword>
<keyword id="KW-0460">Magnesium</keyword>
<keyword id="KW-0479">Metal-binding</keyword>
<dbReference type="EC" id="4.2.1.9" evidence="1"/>
<dbReference type="EMBL" id="CP000227">
    <property type="protein sequence ID" value="ACM12282.1"/>
    <property type="molecule type" value="Genomic_DNA"/>
</dbReference>
<dbReference type="SMR" id="B9IX72"/>
<dbReference type="KEGG" id="bcq:BCQ_1854"/>
<dbReference type="HOGENOM" id="CLU_014271_4_2_9"/>
<dbReference type="UniPathway" id="UPA00047">
    <property type="reaction ID" value="UER00057"/>
</dbReference>
<dbReference type="UniPathway" id="UPA00049">
    <property type="reaction ID" value="UER00061"/>
</dbReference>
<dbReference type="Proteomes" id="UP000000441">
    <property type="component" value="Chromosome"/>
</dbReference>
<dbReference type="GO" id="GO:0005829">
    <property type="term" value="C:cytosol"/>
    <property type="evidence" value="ECO:0007669"/>
    <property type="project" value="TreeGrafter"/>
</dbReference>
<dbReference type="GO" id="GO:0051537">
    <property type="term" value="F:2 iron, 2 sulfur cluster binding"/>
    <property type="evidence" value="ECO:0007669"/>
    <property type="project" value="UniProtKB-UniRule"/>
</dbReference>
<dbReference type="GO" id="GO:0004160">
    <property type="term" value="F:dihydroxy-acid dehydratase activity"/>
    <property type="evidence" value="ECO:0007669"/>
    <property type="project" value="UniProtKB-UniRule"/>
</dbReference>
<dbReference type="GO" id="GO:0000287">
    <property type="term" value="F:magnesium ion binding"/>
    <property type="evidence" value="ECO:0007669"/>
    <property type="project" value="UniProtKB-UniRule"/>
</dbReference>
<dbReference type="GO" id="GO:0009097">
    <property type="term" value="P:isoleucine biosynthetic process"/>
    <property type="evidence" value="ECO:0007669"/>
    <property type="project" value="UniProtKB-UniRule"/>
</dbReference>
<dbReference type="GO" id="GO:0009099">
    <property type="term" value="P:L-valine biosynthetic process"/>
    <property type="evidence" value="ECO:0007669"/>
    <property type="project" value="UniProtKB-UniRule"/>
</dbReference>
<dbReference type="FunFam" id="3.50.30.80:FF:000001">
    <property type="entry name" value="Dihydroxy-acid dehydratase"/>
    <property type="match status" value="1"/>
</dbReference>
<dbReference type="Gene3D" id="3.50.30.80">
    <property type="entry name" value="IlvD/EDD C-terminal domain-like"/>
    <property type="match status" value="1"/>
</dbReference>
<dbReference type="HAMAP" id="MF_00012">
    <property type="entry name" value="IlvD"/>
    <property type="match status" value="1"/>
</dbReference>
<dbReference type="InterPro" id="IPR042096">
    <property type="entry name" value="Dihydro-acid_dehy_C"/>
</dbReference>
<dbReference type="InterPro" id="IPR004404">
    <property type="entry name" value="DihydroxyA_deHydtase"/>
</dbReference>
<dbReference type="InterPro" id="IPR020558">
    <property type="entry name" value="DiOHA_6PGluconate_deHydtase_CS"/>
</dbReference>
<dbReference type="InterPro" id="IPR056740">
    <property type="entry name" value="ILV_EDD_C"/>
</dbReference>
<dbReference type="InterPro" id="IPR000581">
    <property type="entry name" value="ILV_EDD_N"/>
</dbReference>
<dbReference type="InterPro" id="IPR037237">
    <property type="entry name" value="IlvD/EDD_N"/>
</dbReference>
<dbReference type="NCBIfam" id="TIGR00110">
    <property type="entry name" value="ilvD"/>
    <property type="match status" value="1"/>
</dbReference>
<dbReference type="NCBIfam" id="NF002068">
    <property type="entry name" value="PRK00911.1"/>
    <property type="match status" value="1"/>
</dbReference>
<dbReference type="PANTHER" id="PTHR43661">
    <property type="entry name" value="D-XYLONATE DEHYDRATASE"/>
    <property type="match status" value="1"/>
</dbReference>
<dbReference type="PANTHER" id="PTHR43661:SF3">
    <property type="entry name" value="D-XYLONATE DEHYDRATASE YAGF-RELATED"/>
    <property type="match status" value="1"/>
</dbReference>
<dbReference type="Pfam" id="PF24877">
    <property type="entry name" value="ILV_EDD_C"/>
    <property type="match status" value="1"/>
</dbReference>
<dbReference type="Pfam" id="PF00920">
    <property type="entry name" value="ILVD_EDD_N"/>
    <property type="match status" value="1"/>
</dbReference>
<dbReference type="SUPFAM" id="SSF143975">
    <property type="entry name" value="IlvD/EDD N-terminal domain-like"/>
    <property type="match status" value="1"/>
</dbReference>
<dbReference type="SUPFAM" id="SSF52016">
    <property type="entry name" value="LeuD/IlvD-like"/>
    <property type="match status" value="1"/>
</dbReference>
<dbReference type="PROSITE" id="PS00886">
    <property type="entry name" value="ILVD_EDD_1"/>
    <property type="match status" value="1"/>
</dbReference>
<dbReference type="PROSITE" id="PS00887">
    <property type="entry name" value="ILVD_EDD_2"/>
    <property type="match status" value="1"/>
</dbReference>
<reference key="1">
    <citation type="journal article" date="2009" name="J. Bacteriol.">
        <title>Complete genome sequence of the extremophilic Bacillus cereus strain Q1 with industrial applications.</title>
        <authorList>
            <person name="Xiong Z."/>
            <person name="Jiang Y."/>
            <person name="Qi D."/>
            <person name="Lu H."/>
            <person name="Yang F."/>
            <person name="Yang J."/>
            <person name="Chen L."/>
            <person name="Sun L."/>
            <person name="Xu X."/>
            <person name="Xue Y."/>
            <person name="Zhu Y."/>
            <person name="Jin Q."/>
        </authorList>
    </citation>
    <scope>NUCLEOTIDE SEQUENCE [LARGE SCALE GENOMIC DNA]</scope>
    <source>
        <strain>Q1</strain>
    </source>
</reference>
<evidence type="ECO:0000255" key="1">
    <source>
        <dbReference type="HAMAP-Rule" id="MF_00012"/>
    </source>
</evidence>
<accession>B9IX72</accession>
<sequence>MRSDMIKKGFDKAPHRSLLKATGLKDEDFDKPFIAICNSFIEIIPGHKHLNEFGKLVKEAVRAAGMVPFEFNTIGVDDGIAMGHIGMRYSLPSREIIADSVETVVNAHWFDGMICIPNCDKITPGMMMAALRINIPTVFVSGGPMAAGKTSKGEVVDLSSVFEGVGAYQSGKISEEELKDIEDHGCPSCGSCSGMFTANSMNCLCEVLGLALPGNGSILAIDPRREELIKQAAEKLKILIERDIKPRDIVTEEAIDDAFALDMAMGGSTNTVLHTLALAHEAGLDYDMSRIDAVSRRVPHLCKVSPASNWHMEDIDRAGGISAILKEMSRKEGVLHLDRITATGQTLRENIAHAEIKDKEVIHSLENPHSEEGGLRILKGNLAKDGAVIKSGATEVKRFEGPCVIFNSQDEALAGIMLGKVKKGDVVVIRYEGPRGGPGMPEMLAPTSAIAGMGLGADVALLTDGRFSGASRGISVGHISPEAAAGGTIALLEQGDIVCIDVEERLLEVRISDEELDKRKKEWKRPEPKVKTGWLGRYAQMVTSANTGAVLKVPNFD</sequence>
<gene>
    <name evidence="1" type="primary">ilvD</name>
    <name type="ordered locus">BCQ_1854</name>
</gene>
<name>ILVD_BACCQ</name>